<protein>
    <recommendedName>
        <fullName evidence="1">Adenosylhomocysteinase</fullName>
        <ecNumber evidence="1">3.13.2.1</ecNumber>
    </recommendedName>
    <alternativeName>
        <fullName evidence="1">S-adenosyl-L-homocysteine hydrolase</fullName>
        <shortName evidence="1">AdoHcyase</shortName>
    </alternativeName>
</protein>
<feature type="chain" id="PRO_0000116944" description="Adenosylhomocysteinase">
    <location>
        <begin position="1"/>
        <end position="465"/>
    </location>
</feature>
<feature type="binding site" evidence="1">
    <location>
        <position position="56"/>
    </location>
    <ligand>
        <name>substrate</name>
    </ligand>
</feature>
<feature type="binding site" evidence="1">
    <location>
        <position position="131"/>
    </location>
    <ligand>
        <name>substrate</name>
    </ligand>
</feature>
<feature type="binding site" evidence="1">
    <location>
        <position position="191"/>
    </location>
    <ligand>
        <name>substrate</name>
    </ligand>
</feature>
<feature type="binding site" evidence="1">
    <location>
        <begin position="192"/>
        <end position="194"/>
    </location>
    <ligand>
        <name>NAD(+)</name>
        <dbReference type="ChEBI" id="CHEBI:57540"/>
    </ligand>
</feature>
<feature type="binding site" evidence="1">
    <location>
        <position position="221"/>
    </location>
    <ligand>
        <name>substrate</name>
    </ligand>
</feature>
<feature type="binding site" evidence="1">
    <location>
        <position position="225"/>
    </location>
    <ligand>
        <name>substrate</name>
    </ligand>
</feature>
<feature type="binding site" evidence="1">
    <location>
        <position position="226"/>
    </location>
    <ligand>
        <name>NAD(+)</name>
        <dbReference type="ChEBI" id="CHEBI:57540"/>
    </ligand>
</feature>
<feature type="binding site" evidence="1">
    <location>
        <begin position="255"/>
        <end position="260"/>
    </location>
    <ligand>
        <name>NAD(+)</name>
        <dbReference type="ChEBI" id="CHEBI:57540"/>
    </ligand>
</feature>
<feature type="binding site" evidence="1">
    <location>
        <position position="278"/>
    </location>
    <ligand>
        <name>NAD(+)</name>
        <dbReference type="ChEBI" id="CHEBI:57540"/>
    </ligand>
</feature>
<feature type="binding site" evidence="1">
    <location>
        <position position="313"/>
    </location>
    <ligand>
        <name>NAD(+)</name>
        <dbReference type="ChEBI" id="CHEBI:57540"/>
    </ligand>
</feature>
<feature type="binding site" evidence="1">
    <location>
        <begin position="334"/>
        <end position="336"/>
    </location>
    <ligand>
        <name>NAD(+)</name>
        <dbReference type="ChEBI" id="CHEBI:57540"/>
    </ligand>
</feature>
<feature type="binding site" evidence="1">
    <location>
        <position position="379"/>
    </location>
    <ligand>
        <name>NAD(+)</name>
        <dbReference type="ChEBI" id="CHEBI:57540"/>
    </ligand>
</feature>
<gene>
    <name evidence="1" type="primary">ahcY</name>
    <name type="ordered locus">BH00310</name>
</gene>
<sequence length="465" mass="51029">MTAQDYVVKDIALAAYGRKELDIAETEMPGLMACREEFSSSQPLRGARISGSLHMTIQTAVLIETLKAIGANVRWSSSNIFSTQDHAAAAIAATGTPVFAVKGETLEEYWTYIDAIFQWPDGNPSNLILDDGADATNYILMGSRAETNKDILSHPKTEEEELFFKQIQRRMEATPGFFTRQRAAIKGISEETTTGVHRLHQLQKEGLLPFPAININDSVTKSKFDNKYGCRESLVDGIRRATDVMIAGKTAIVCGYGDVGKGSAASLSGAGARVKVTEIDPICALQAAMDGYEVVNLDDAASSADIIITTTGNKDIVRLDHMRKVKDMCILGNIGHFDNEIQVAALQNLPWTNIKPQVDMITFPDGKRIILLSEGRLLNLGNATGHPSFVMSASFTNQVLAQIELFTRSGHYKNEVTVLPKYLDEKVARLHLDQLGIKLTTLSQEQAAYIGVTPQGPYKPDHYRY</sequence>
<reference key="1">
    <citation type="journal article" date="2004" name="Proc. Natl. Acad. Sci. U.S.A.">
        <title>The louse-borne human pathogen Bartonella quintana is a genomic derivative of the zoonotic agent Bartonella henselae.</title>
        <authorList>
            <person name="Alsmark U.C.M."/>
            <person name="Frank A.C."/>
            <person name="Karlberg E.O."/>
            <person name="Legault B.-A."/>
            <person name="Ardell D.H."/>
            <person name="Canbaeck B."/>
            <person name="Eriksson A.-S."/>
            <person name="Naeslund A.K."/>
            <person name="Handley S.A."/>
            <person name="Huvet M."/>
            <person name="La Scola B."/>
            <person name="Holmberg M."/>
            <person name="Andersson S.G.E."/>
        </authorList>
    </citation>
    <scope>NUCLEOTIDE SEQUENCE [LARGE SCALE GENOMIC DNA]</scope>
    <source>
        <strain>ATCC 49882 / DSM 28221 / CCUG 30454 / Houston 1</strain>
    </source>
</reference>
<keyword id="KW-0963">Cytoplasm</keyword>
<keyword id="KW-0378">Hydrolase</keyword>
<keyword id="KW-0520">NAD</keyword>
<keyword id="KW-0554">One-carbon metabolism</keyword>
<organism>
    <name type="scientific">Bartonella henselae (strain ATCC 49882 / DSM 28221 / CCUG 30454 / Houston 1)</name>
    <name type="common">Rochalimaea henselae</name>
    <dbReference type="NCBI Taxonomy" id="283166"/>
    <lineage>
        <taxon>Bacteria</taxon>
        <taxon>Pseudomonadati</taxon>
        <taxon>Pseudomonadota</taxon>
        <taxon>Alphaproteobacteria</taxon>
        <taxon>Hyphomicrobiales</taxon>
        <taxon>Bartonellaceae</taxon>
        <taxon>Bartonella</taxon>
    </lineage>
</organism>
<name>SAHH_BARHE</name>
<comment type="function">
    <text evidence="1">May play a key role in the regulation of the intracellular concentration of adenosylhomocysteine.</text>
</comment>
<comment type="catalytic activity">
    <reaction evidence="1">
        <text>S-adenosyl-L-homocysteine + H2O = L-homocysteine + adenosine</text>
        <dbReference type="Rhea" id="RHEA:21708"/>
        <dbReference type="ChEBI" id="CHEBI:15377"/>
        <dbReference type="ChEBI" id="CHEBI:16335"/>
        <dbReference type="ChEBI" id="CHEBI:57856"/>
        <dbReference type="ChEBI" id="CHEBI:58199"/>
        <dbReference type="EC" id="3.13.2.1"/>
    </reaction>
</comment>
<comment type="cofactor">
    <cofactor evidence="1">
        <name>NAD(+)</name>
        <dbReference type="ChEBI" id="CHEBI:57540"/>
    </cofactor>
    <text evidence="1">Binds 1 NAD(+) per subunit.</text>
</comment>
<comment type="pathway">
    <text evidence="1">Amino-acid biosynthesis; L-homocysteine biosynthesis; L-homocysteine from S-adenosyl-L-homocysteine: step 1/1.</text>
</comment>
<comment type="subcellular location">
    <subcellularLocation>
        <location evidence="1">Cytoplasm</location>
    </subcellularLocation>
</comment>
<comment type="similarity">
    <text evidence="1">Belongs to the adenosylhomocysteinase family.</text>
</comment>
<accession>Q6G584</accession>
<proteinExistence type="inferred from homology"/>
<dbReference type="EC" id="3.13.2.1" evidence="1"/>
<dbReference type="EMBL" id="BX897699">
    <property type="protein sequence ID" value="CAF26847.1"/>
    <property type="molecule type" value="Genomic_DNA"/>
</dbReference>
<dbReference type="RefSeq" id="WP_011179998.1">
    <property type="nucleotide sequence ID" value="NZ_LRIJ02000001.1"/>
</dbReference>
<dbReference type="SMR" id="Q6G584"/>
<dbReference type="PaxDb" id="283166-BH00310"/>
<dbReference type="EnsemblBacteria" id="CAF26847">
    <property type="protein sequence ID" value="CAF26847"/>
    <property type="gene ID" value="BH00310"/>
</dbReference>
<dbReference type="GeneID" id="92986320"/>
<dbReference type="KEGG" id="bhe:BH00310"/>
<dbReference type="eggNOG" id="COG0499">
    <property type="taxonomic scope" value="Bacteria"/>
</dbReference>
<dbReference type="OrthoDB" id="9802717at2"/>
<dbReference type="UniPathway" id="UPA00314">
    <property type="reaction ID" value="UER00076"/>
</dbReference>
<dbReference type="Proteomes" id="UP000000421">
    <property type="component" value="Chromosome"/>
</dbReference>
<dbReference type="GO" id="GO:0005829">
    <property type="term" value="C:cytosol"/>
    <property type="evidence" value="ECO:0007669"/>
    <property type="project" value="TreeGrafter"/>
</dbReference>
<dbReference type="GO" id="GO:0004013">
    <property type="term" value="F:adenosylhomocysteinase activity"/>
    <property type="evidence" value="ECO:0007669"/>
    <property type="project" value="UniProtKB-UniRule"/>
</dbReference>
<dbReference type="GO" id="GO:0071269">
    <property type="term" value="P:L-homocysteine biosynthetic process"/>
    <property type="evidence" value="ECO:0007669"/>
    <property type="project" value="UniProtKB-UniRule"/>
</dbReference>
<dbReference type="GO" id="GO:0006730">
    <property type="term" value="P:one-carbon metabolic process"/>
    <property type="evidence" value="ECO:0007669"/>
    <property type="project" value="UniProtKB-KW"/>
</dbReference>
<dbReference type="GO" id="GO:0033353">
    <property type="term" value="P:S-adenosylmethionine cycle"/>
    <property type="evidence" value="ECO:0007669"/>
    <property type="project" value="TreeGrafter"/>
</dbReference>
<dbReference type="CDD" id="cd00401">
    <property type="entry name" value="SAHH"/>
    <property type="match status" value="1"/>
</dbReference>
<dbReference type="FunFam" id="3.40.50.720:FF:000004">
    <property type="entry name" value="Adenosylhomocysteinase"/>
    <property type="match status" value="1"/>
</dbReference>
<dbReference type="Gene3D" id="3.40.50.1480">
    <property type="entry name" value="Adenosylhomocysteinase-like"/>
    <property type="match status" value="1"/>
</dbReference>
<dbReference type="Gene3D" id="3.40.50.720">
    <property type="entry name" value="NAD(P)-binding Rossmann-like Domain"/>
    <property type="match status" value="1"/>
</dbReference>
<dbReference type="HAMAP" id="MF_00563">
    <property type="entry name" value="AdoHcyase"/>
    <property type="match status" value="1"/>
</dbReference>
<dbReference type="InterPro" id="IPR042172">
    <property type="entry name" value="Adenosylhomocyst_ase-like_sf"/>
</dbReference>
<dbReference type="InterPro" id="IPR000043">
    <property type="entry name" value="Adenosylhomocysteinase-like"/>
</dbReference>
<dbReference type="InterPro" id="IPR015878">
    <property type="entry name" value="Ado_hCys_hydrolase_NAD-bd"/>
</dbReference>
<dbReference type="InterPro" id="IPR036291">
    <property type="entry name" value="NAD(P)-bd_dom_sf"/>
</dbReference>
<dbReference type="InterPro" id="IPR020082">
    <property type="entry name" value="S-Ado-L-homoCys_hydrolase_CS"/>
</dbReference>
<dbReference type="NCBIfam" id="TIGR00936">
    <property type="entry name" value="ahcY"/>
    <property type="match status" value="1"/>
</dbReference>
<dbReference type="NCBIfam" id="NF004005">
    <property type="entry name" value="PRK05476.2-3"/>
    <property type="match status" value="1"/>
</dbReference>
<dbReference type="PANTHER" id="PTHR23420">
    <property type="entry name" value="ADENOSYLHOMOCYSTEINASE"/>
    <property type="match status" value="1"/>
</dbReference>
<dbReference type="PANTHER" id="PTHR23420:SF0">
    <property type="entry name" value="ADENOSYLHOMOCYSTEINASE"/>
    <property type="match status" value="1"/>
</dbReference>
<dbReference type="Pfam" id="PF05221">
    <property type="entry name" value="AdoHcyase"/>
    <property type="match status" value="1"/>
</dbReference>
<dbReference type="Pfam" id="PF00670">
    <property type="entry name" value="AdoHcyase_NAD"/>
    <property type="match status" value="1"/>
</dbReference>
<dbReference type="PIRSF" id="PIRSF001109">
    <property type="entry name" value="Ad_hcy_hydrolase"/>
    <property type="match status" value="1"/>
</dbReference>
<dbReference type="SMART" id="SM00996">
    <property type="entry name" value="AdoHcyase"/>
    <property type="match status" value="1"/>
</dbReference>
<dbReference type="SMART" id="SM00997">
    <property type="entry name" value="AdoHcyase_NAD"/>
    <property type="match status" value="1"/>
</dbReference>
<dbReference type="SUPFAM" id="SSF52283">
    <property type="entry name" value="Formate/glycerate dehydrogenase catalytic domain-like"/>
    <property type="match status" value="1"/>
</dbReference>
<dbReference type="SUPFAM" id="SSF51735">
    <property type="entry name" value="NAD(P)-binding Rossmann-fold domains"/>
    <property type="match status" value="1"/>
</dbReference>
<dbReference type="PROSITE" id="PS00738">
    <property type="entry name" value="ADOHCYASE_1"/>
    <property type="match status" value="1"/>
</dbReference>
<dbReference type="PROSITE" id="PS00739">
    <property type="entry name" value="ADOHCYASE_2"/>
    <property type="match status" value="1"/>
</dbReference>
<evidence type="ECO:0000255" key="1">
    <source>
        <dbReference type="HAMAP-Rule" id="MF_00563"/>
    </source>
</evidence>